<protein>
    <recommendedName>
        <fullName evidence="6">Transcription termination factor 3, mitochondrial</fullName>
    </recommendedName>
    <alternativeName>
        <fullName evidence="5">Mitochondrial transcription termination factor 3</fullName>
        <shortName>mTerf3</shortName>
    </alternativeName>
</protein>
<reference evidence="8" key="1">
    <citation type="journal article" date="2006" name="Biochim. Biophys. Acta">
        <title>MTERF3, the most conserved member of the mTERF-family, is a modular factor involved in mitochondrial protein synthesis.</title>
        <authorList>
            <person name="Roberti M."/>
            <person name="Bruni F."/>
            <person name="Loguercio Polosa P."/>
            <person name="Manzari C."/>
            <person name="Gadaleta M.N."/>
            <person name="Cantatore P."/>
        </authorList>
    </citation>
    <scope>NUCLEOTIDE SEQUENCE [MRNA]</scope>
    <scope>FUNCTION</scope>
</reference>
<reference evidence="10" key="2">
    <citation type="journal article" date="2000" name="Science">
        <title>The genome sequence of Drosophila melanogaster.</title>
        <authorList>
            <person name="Adams M.D."/>
            <person name="Celniker S.E."/>
            <person name="Holt R.A."/>
            <person name="Evans C.A."/>
            <person name="Gocayne J.D."/>
            <person name="Amanatides P.G."/>
            <person name="Scherer S.E."/>
            <person name="Li P.W."/>
            <person name="Hoskins R.A."/>
            <person name="Galle R.F."/>
            <person name="George R.A."/>
            <person name="Lewis S.E."/>
            <person name="Richards S."/>
            <person name="Ashburner M."/>
            <person name="Henderson S.N."/>
            <person name="Sutton G.G."/>
            <person name="Wortman J.R."/>
            <person name="Yandell M.D."/>
            <person name="Zhang Q."/>
            <person name="Chen L.X."/>
            <person name="Brandon R.C."/>
            <person name="Rogers Y.-H.C."/>
            <person name="Blazej R.G."/>
            <person name="Champe M."/>
            <person name="Pfeiffer B.D."/>
            <person name="Wan K.H."/>
            <person name="Doyle C."/>
            <person name="Baxter E.G."/>
            <person name="Helt G."/>
            <person name="Nelson C.R."/>
            <person name="Miklos G.L.G."/>
            <person name="Abril J.F."/>
            <person name="Agbayani A."/>
            <person name="An H.-J."/>
            <person name="Andrews-Pfannkoch C."/>
            <person name="Baldwin D."/>
            <person name="Ballew R.M."/>
            <person name="Basu A."/>
            <person name="Baxendale J."/>
            <person name="Bayraktaroglu L."/>
            <person name="Beasley E.M."/>
            <person name="Beeson K.Y."/>
            <person name="Benos P.V."/>
            <person name="Berman B.P."/>
            <person name="Bhandari D."/>
            <person name="Bolshakov S."/>
            <person name="Borkova D."/>
            <person name="Botchan M.R."/>
            <person name="Bouck J."/>
            <person name="Brokstein P."/>
            <person name="Brottier P."/>
            <person name="Burtis K.C."/>
            <person name="Busam D.A."/>
            <person name="Butler H."/>
            <person name="Cadieu E."/>
            <person name="Center A."/>
            <person name="Chandra I."/>
            <person name="Cherry J.M."/>
            <person name="Cawley S."/>
            <person name="Dahlke C."/>
            <person name="Davenport L.B."/>
            <person name="Davies P."/>
            <person name="de Pablos B."/>
            <person name="Delcher A."/>
            <person name="Deng Z."/>
            <person name="Mays A.D."/>
            <person name="Dew I."/>
            <person name="Dietz S.M."/>
            <person name="Dodson K."/>
            <person name="Doup L.E."/>
            <person name="Downes M."/>
            <person name="Dugan-Rocha S."/>
            <person name="Dunkov B.C."/>
            <person name="Dunn P."/>
            <person name="Durbin K.J."/>
            <person name="Evangelista C.C."/>
            <person name="Ferraz C."/>
            <person name="Ferriera S."/>
            <person name="Fleischmann W."/>
            <person name="Fosler C."/>
            <person name="Gabrielian A.E."/>
            <person name="Garg N.S."/>
            <person name="Gelbart W.M."/>
            <person name="Glasser K."/>
            <person name="Glodek A."/>
            <person name="Gong F."/>
            <person name="Gorrell J.H."/>
            <person name="Gu Z."/>
            <person name="Guan P."/>
            <person name="Harris M."/>
            <person name="Harris N.L."/>
            <person name="Harvey D.A."/>
            <person name="Heiman T.J."/>
            <person name="Hernandez J.R."/>
            <person name="Houck J."/>
            <person name="Hostin D."/>
            <person name="Houston K.A."/>
            <person name="Howland T.J."/>
            <person name="Wei M.-H."/>
            <person name="Ibegwam C."/>
            <person name="Jalali M."/>
            <person name="Kalush F."/>
            <person name="Karpen G.H."/>
            <person name="Ke Z."/>
            <person name="Kennison J.A."/>
            <person name="Ketchum K.A."/>
            <person name="Kimmel B.E."/>
            <person name="Kodira C.D."/>
            <person name="Kraft C.L."/>
            <person name="Kravitz S."/>
            <person name="Kulp D."/>
            <person name="Lai Z."/>
            <person name="Lasko P."/>
            <person name="Lei Y."/>
            <person name="Levitsky A.A."/>
            <person name="Li J.H."/>
            <person name="Li Z."/>
            <person name="Liang Y."/>
            <person name="Lin X."/>
            <person name="Liu X."/>
            <person name="Mattei B."/>
            <person name="McIntosh T.C."/>
            <person name="McLeod M.P."/>
            <person name="McPherson D."/>
            <person name="Merkulov G."/>
            <person name="Milshina N.V."/>
            <person name="Mobarry C."/>
            <person name="Morris J."/>
            <person name="Moshrefi A."/>
            <person name="Mount S.M."/>
            <person name="Moy M."/>
            <person name="Murphy B."/>
            <person name="Murphy L."/>
            <person name="Muzny D.M."/>
            <person name="Nelson D.L."/>
            <person name="Nelson D.R."/>
            <person name="Nelson K.A."/>
            <person name="Nixon K."/>
            <person name="Nusskern D.R."/>
            <person name="Pacleb J.M."/>
            <person name="Palazzolo M."/>
            <person name="Pittman G.S."/>
            <person name="Pan S."/>
            <person name="Pollard J."/>
            <person name="Puri V."/>
            <person name="Reese M.G."/>
            <person name="Reinert K."/>
            <person name="Remington K."/>
            <person name="Saunders R.D.C."/>
            <person name="Scheeler F."/>
            <person name="Shen H."/>
            <person name="Shue B.C."/>
            <person name="Siden-Kiamos I."/>
            <person name="Simpson M."/>
            <person name="Skupski M.P."/>
            <person name="Smith T.J."/>
            <person name="Spier E."/>
            <person name="Spradling A.C."/>
            <person name="Stapleton M."/>
            <person name="Strong R."/>
            <person name="Sun E."/>
            <person name="Svirskas R."/>
            <person name="Tector C."/>
            <person name="Turner R."/>
            <person name="Venter E."/>
            <person name="Wang A.H."/>
            <person name="Wang X."/>
            <person name="Wang Z.-Y."/>
            <person name="Wassarman D.A."/>
            <person name="Weinstock G.M."/>
            <person name="Weissenbach J."/>
            <person name="Williams S.M."/>
            <person name="Woodage T."/>
            <person name="Worley K.C."/>
            <person name="Wu D."/>
            <person name="Yang S."/>
            <person name="Yao Q.A."/>
            <person name="Ye J."/>
            <person name="Yeh R.-F."/>
            <person name="Zaveri J.S."/>
            <person name="Zhan M."/>
            <person name="Zhang G."/>
            <person name="Zhao Q."/>
            <person name="Zheng L."/>
            <person name="Zheng X.H."/>
            <person name="Zhong F.N."/>
            <person name="Zhong W."/>
            <person name="Zhou X."/>
            <person name="Zhu S.C."/>
            <person name="Zhu X."/>
            <person name="Smith H.O."/>
            <person name="Gibbs R.A."/>
            <person name="Myers E.W."/>
            <person name="Rubin G.M."/>
            <person name="Venter J.C."/>
        </authorList>
    </citation>
    <scope>NUCLEOTIDE SEQUENCE [LARGE SCALE GENOMIC DNA]</scope>
    <source>
        <strain evidence="8">Berkeley</strain>
    </source>
</reference>
<reference evidence="10" key="3">
    <citation type="journal article" date="2002" name="Genome Biol.">
        <title>Annotation of the Drosophila melanogaster euchromatic genome: a systematic review.</title>
        <authorList>
            <person name="Misra S."/>
            <person name="Crosby M.A."/>
            <person name="Mungall C.J."/>
            <person name="Matthews B.B."/>
            <person name="Campbell K.S."/>
            <person name="Hradecky P."/>
            <person name="Huang Y."/>
            <person name="Kaminker J.S."/>
            <person name="Millburn G.H."/>
            <person name="Prochnik S.E."/>
            <person name="Smith C.D."/>
            <person name="Tupy J.L."/>
            <person name="Whitfield E.J."/>
            <person name="Bayraktaroglu L."/>
            <person name="Berman B.P."/>
            <person name="Bettencourt B.R."/>
            <person name="Celniker S.E."/>
            <person name="de Grey A.D.N.J."/>
            <person name="Drysdale R.A."/>
            <person name="Harris N.L."/>
            <person name="Richter J."/>
            <person name="Russo S."/>
            <person name="Schroeder A.J."/>
            <person name="Shu S.Q."/>
            <person name="Stapleton M."/>
            <person name="Yamada C."/>
            <person name="Ashburner M."/>
            <person name="Gelbart W.M."/>
            <person name="Rubin G.M."/>
            <person name="Lewis S.E."/>
        </authorList>
    </citation>
    <scope>GENOME REANNOTATION</scope>
    <source>
        <strain evidence="8">Berkeley</strain>
    </source>
</reference>
<reference evidence="7" key="4">
    <citation type="journal article" date="2002" name="Genome Biol.">
        <title>A Drosophila full-length cDNA resource.</title>
        <authorList>
            <person name="Stapleton M."/>
            <person name="Carlson J.W."/>
            <person name="Brokstein P."/>
            <person name="Yu C."/>
            <person name="Champe M."/>
            <person name="George R.A."/>
            <person name="Guarin H."/>
            <person name="Kronmiller B."/>
            <person name="Pacleb J.M."/>
            <person name="Park S."/>
            <person name="Wan K.H."/>
            <person name="Rubin G.M."/>
            <person name="Celniker S.E."/>
        </authorList>
    </citation>
    <scope>NUCLEOTIDE SEQUENCE [LARGE SCALE MRNA]</scope>
    <source>
        <strain evidence="7">Berkeley</strain>
        <tissue evidence="7">Embryo</tissue>
    </source>
</reference>
<reference evidence="6" key="5">
    <citation type="journal article" date="2013" name="PLoS Genet.">
        <title>MTERF3 regulates mitochondrial ribosome biogenesis in invertebrates and mammals.</title>
        <authorList>
            <person name="Wredenberg A."/>
            <person name="Lagouge M."/>
            <person name="Bratic A."/>
            <person name="Metodiev M.D."/>
            <person name="Spaahr H."/>
            <person name="Mourier A."/>
            <person name="Freyer C."/>
            <person name="Ruzzenente B."/>
            <person name="Tain L."/>
            <person name="Groenke S."/>
            <person name="Baggio F."/>
            <person name="Kukat C."/>
            <person name="Kremmer E."/>
            <person name="Wibom R."/>
            <person name="Polosa P.L."/>
            <person name="Habermann B."/>
            <person name="Partridge L."/>
            <person name="Park C.B."/>
            <person name="Larsson N.G."/>
        </authorList>
    </citation>
    <scope>FUNCTION</scope>
    <scope>SUBCELLULAR LOCATION</scope>
    <scope>DISRUPTION PHENOTYPE</scope>
</reference>
<comment type="function">
    <text evidence="1 3 4">Binds promoter DNA and regulates initiation of transcription (By similarity). Regulator of mitochondrial ribosome biogenesis and translation that is essential for development (PubMed:16787637, PubMed:23300484). Required for normal mitochondrial transcription and translation (PubMed:16787637, PubMed:23300484). Required for assembly of mitochondrial respiratory complexes and normal mitochondrial function (PubMed:23300484). Maintains 16S rRNA levels and functions in mitochondrial ribosome assembly by regulating the biogenesis of the 39S ribosomal subunit (PubMed:23300484).</text>
</comment>
<comment type="subcellular location">
    <subcellularLocation>
        <location evidence="4">Mitochondrion</location>
    </subcellularLocation>
</comment>
<comment type="disruption phenotype">
    <text evidence="4">RNAi-mediated knockdown is pupal lethal. Larvae display a delay in development and a decrease in body size. Display progressive defects in mitochondrial respiratory chain capacity as well as a decrease in the enzyme activity of all mitochondrial oxidative phosphorylation complexes. Decrease in enzyme activity is particularly severe in complex I and IV which also display a decrease in the levels of their assembled complexes. Progressive reduction in 16S rRNA levels and impaired assembly of the large (39S) mitochondrial ribosomal subunit. Increase in mitochondrial DNA (mtDNA) transcription and impaired mitochondrial translation.</text>
</comment>
<comment type="similarity">
    <text evidence="6">Belongs to the mTERF family.</text>
</comment>
<sequence length="354" mass="41267">MFCSALRNILRNSQNAAKNATITSQIRNLRGQQSVHHEVEVLTSPGITTKQNDKKTEPAECEGSKEVALDFRNREAHVPSFNLAAYVNNSSTLQQFLSLGVDLHSIERRKGLGDFVLKLDFEKNVKPYITFLVDQGVSPDDFGRMFTKNPLLFKEDLDDLQTRVNYLKSKRFSDEARQRILTQNPYWLMFSTRRVDRRLGYFQKEFKLSGHDLRLLATREPNAITYNMEHLRKSVFTLKEEMGFNAKELSDLVVRKPRLLMIPPDDLVERFSYIHQDMGLPHAQIVQCPELLASREFRLRERHEFLKLLGRAQYDPQKDLYISPKTIVEGNNFYFVRNVAKSDLETFDLFLKTR</sequence>
<name>MTEF3_DROME</name>
<proteinExistence type="evidence at transcript level"/>
<keyword id="KW-0238">DNA-binding</keyword>
<keyword id="KW-0496">Mitochondrion</keyword>
<keyword id="KW-1185">Reference proteome</keyword>
<keyword id="KW-0690">Ribosome biogenesis</keyword>
<keyword id="KW-0804">Transcription</keyword>
<keyword id="KW-0805">Transcription regulation</keyword>
<keyword id="KW-0809">Transit peptide</keyword>
<dbReference type="EMBL" id="DQ414686">
    <property type="protein sequence ID" value="ABD75710.1"/>
    <property type="molecule type" value="mRNA"/>
</dbReference>
<dbReference type="EMBL" id="AE014296">
    <property type="protein sequence ID" value="AAF51620.1"/>
    <property type="molecule type" value="Genomic_DNA"/>
</dbReference>
<dbReference type="EMBL" id="AY051744">
    <property type="protein sequence ID" value="AAK93168.1"/>
    <property type="molecule type" value="mRNA"/>
</dbReference>
<dbReference type="RefSeq" id="NP_649240.1">
    <property type="nucleotide sequence ID" value="NM_140983.3"/>
</dbReference>
<dbReference type="SMR" id="Q9VPD5"/>
<dbReference type="FunCoup" id="Q9VPD5">
    <property type="interactions" value="1374"/>
</dbReference>
<dbReference type="IntAct" id="Q9VPD5">
    <property type="interactions" value="13"/>
</dbReference>
<dbReference type="STRING" id="7227.FBpp0077873"/>
<dbReference type="PaxDb" id="7227-FBpp0077873"/>
<dbReference type="DNASU" id="40279"/>
<dbReference type="EnsemblMetazoa" id="FBtr0078215">
    <property type="protein sequence ID" value="FBpp0077873"/>
    <property type="gene ID" value="FBgn0037008"/>
</dbReference>
<dbReference type="GeneID" id="40279"/>
<dbReference type="KEGG" id="dme:Dmel_CG5047"/>
<dbReference type="UCSC" id="CG5047-RA">
    <property type="organism name" value="d. melanogaster"/>
</dbReference>
<dbReference type="AGR" id="FB:FBgn0037008"/>
<dbReference type="CTD" id="51001"/>
<dbReference type="FlyBase" id="FBgn0037008">
    <property type="gene designation" value="mTerf3"/>
</dbReference>
<dbReference type="VEuPathDB" id="VectorBase:FBgn0037008"/>
<dbReference type="eggNOG" id="KOG1267">
    <property type="taxonomic scope" value="Eukaryota"/>
</dbReference>
<dbReference type="GeneTree" id="ENSGT00390000005801"/>
<dbReference type="HOGENOM" id="CLU_042536_1_0_1"/>
<dbReference type="InParanoid" id="Q9VPD5"/>
<dbReference type="OMA" id="NPFWLMF"/>
<dbReference type="OrthoDB" id="637682at2759"/>
<dbReference type="PhylomeDB" id="Q9VPD5"/>
<dbReference type="Reactome" id="R-DME-5205685">
    <property type="pathway name" value="PINK1-PRKN Mediated Mitophagy"/>
</dbReference>
<dbReference type="SignaLink" id="Q9VPD5"/>
<dbReference type="BioGRID-ORCS" id="40279">
    <property type="hits" value="0 hits in 1 CRISPR screen"/>
</dbReference>
<dbReference type="GenomeRNAi" id="40279"/>
<dbReference type="PRO" id="PR:Q9VPD5"/>
<dbReference type="Proteomes" id="UP000000803">
    <property type="component" value="Chromosome 3L"/>
</dbReference>
<dbReference type="Bgee" id="FBgn0037008">
    <property type="expression patterns" value="Expressed in adult Malpighian tubule principal cell of initial segment in Malpighian tubule and 68 other cell types or tissues"/>
</dbReference>
<dbReference type="GO" id="GO:0005759">
    <property type="term" value="C:mitochondrial matrix"/>
    <property type="evidence" value="ECO:0000314"/>
    <property type="project" value="FlyBase"/>
</dbReference>
<dbReference type="GO" id="GO:0005739">
    <property type="term" value="C:mitochondrion"/>
    <property type="evidence" value="ECO:0000318"/>
    <property type="project" value="GO_Central"/>
</dbReference>
<dbReference type="GO" id="GO:0003690">
    <property type="term" value="F:double-stranded DNA binding"/>
    <property type="evidence" value="ECO:0007669"/>
    <property type="project" value="InterPro"/>
</dbReference>
<dbReference type="GO" id="GO:0070180">
    <property type="term" value="F:large ribosomal subunit rRNA binding"/>
    <property type="evidence" value="ECO:0000314"/>
    <property type="project" value="FlyBase"/>
</dbReference>
<dbReference type="GO" id="GO:1902775">
    <property type="term" value="P:mitochondrial large ribosomal subunit assembly"/>
    <property type="evidence" value="ECO:0000315"/>
    <property type="project" value="FlyBase"/>
</dbReference>
<dbReference type="GO" id="GO:0061668">
    <property type="term" value="P:mitochondrial ribosome assembly"/>
    <property type="evidence" value="ECO:0000318"/>
    <property type="project" value="GO_Central"/>
</dbReference>
<dbReference type="GO" id="GO:1903108">
    <property type="term" value="P:regulation of mitochondrial transcription"/>
    <property type="evidence" value="ECO:0000315"/>
    <property type="project" value="FlyBase"/>
</dbReference>
<dbReference type="FunFam" id="1.25.70.10:FF:000002">
    <property type="entry name" value="transcription termination factor 3, mitochondrial"/>
    <property type="match status" value="1"/>
</dbReference>
<dbReference type="Gene3D" id="1.25.70.10">
    <property type="entry name" value="Transcription termination factor 3, mitochondrial"/>
    <property type="match status" value="1"/>
</dbReference>
<dbReference type="InterPro" id="IPR003690">
    <property type="entry name" value="MTERF"/>
</dbReference>
<dbReference type="InterPro" id="IPR038538">
    <property type="entry name" value="MTERF_sf"/>
</dbReference>
<dbReference type="PANTHER" id="PTHR13068">
    <property type="entry name" value="CGI-12 PROTEIN-RELATED"/>
    <property type="match status" value="1"/>
</dbReference>
<dbReference type="PANTHER" id="PTHR13068:SF112">
    <property type="entry name" value="TRANSCRIPTION TERMINATION FACTOR 3, MITOCHONDRIAL"/>
    <property type="match status" value="1"/>
</dbReference>
<dbReference type="Pfam" id="PF02536">
    <property type="entry name" value="mTERF"/>
    <property type="match status" value="1"/>
</dbReference>
<dbReference type="SMART" id="SM00733">
    <property type="entry name" value="Mterf"/>
    <property type="match status" value="5"/>
</dbReference>
<gene>
    <name evidence="5 9" type="primary">mTerf3</name>
    <name evidence="9" type="ORF">CG5047</name>
</gene>
<organism evidence="10">
    <name type="scientific">Drosophila melanogaster</name>
    <name type="common">Fruit fly</name>
    <dbReference type="NCBI Taxonomy" id="7227"/>
    <lineage>
        <taxon>Eukaryota</taxon>
        <taxon>Metazoa</taxon>
        <taxon>Ecdysozoa</taxon>
        <taxon>Arthropoda</taxon>
        <taxon>Hexapoda</taxon>
        <taxon>Insecta</taxon>
        <taxon>Pterygota</taxon>
        <taxon>Neoptera</taxon>
        <taxon>Endopterygota</taxon>
        <taxon>Diptera</taxon>
        <taxon>Brachycera</taxon>
        <taxon>Muscomorpha</taxon>
        <taxon>Ephydroidea</taxon>
        <taxon>Drosophilidae</taxon>
        <taxon>Drosophila</taxon>
        <taxon>Sophophora</taxon>
    </lineage>
</organism>
<evidence type="ECO:0000250" key="1">
    <source>
        <dbReference type="UniProtKB" id="Q96E29"/>
    </source>
</evidence>
<evidence type="ECO:0000255" key="2"/>
<evidence type="ECO:0000269" key="3">
    <source>
    </source>
</evidence>
<evidence type="ECO:0000269" key="4">
    <source>
    </source>
</evidence>
<evidence type="ECO:0000303" key="5">
    <source>
    </source>
</evidence>
<evidence type="ECO:0000305" key="6"/>
<evidence type="ECO:0000312" key="7">
    <source>
        <dbReference type="EMBL" id="AAK93168.1"/>
    </source>
</evidence>
<evidence type="ECO:0000312" key="8">
    <source>
        <dbReference type="EMBL" id="ABD75710.1"/>
    </source>
</evidence>
<evidence type="ECO:0000312" key="9">
    <source>
        <dbReference type="FlyBase" id="FBgn0037008"/>
    </source>
</evidence>
<evidence type="ECO:0000312" key="10">
    <source>
        <dbReference type="Proteomes" id="UP000000803"/>
    </source>
</evidence>
<accession>Q9VPD5</accession>
<accession>Q06YR8</accession>
<feature type="transit peptide" description="Mitochondrion" evidence="2">
    <location>
        <begin position="1"/>
        <end position="89"/>
    </location>
</feature>
<feature type="chain" id="PRO_0000438919" description="Transcription termination factor 3, mitochondrial" evidence="2">
    <location>
        <begin position="90"/>
        <end position="354"/>
    </location>
</feature>
<feature type="sequence conflict" description="In Ref. 1; ABD75710." evidence="6" ref="1">
    <original>L</original>
    <variation>V</variation>
    <location>
        <position position="42"/>
    </location>
</feature>
<feature type="sequence conflict" description="In Ref. 1; ABD75710." evidence="6" ref="1">
    <original>V</original>
    <variation>A</variation>
    <location>
        <position position="125"/>
    </location>
</feature>
<feature type="sequence conflict" description="In Ref. 1; ABD75710." evidence="6" ref="1">
    <original>E</original>
    <variation>G</variation>
    <location>
        <position position="301"/>
    </location>
</feature>
<feature type="sequence conflict" description="In Ref. 1; ABD75710." evidence="6" ref="1">
    <original>P</original>
    <variation>S</variation>
    <location>
        <position position="316"/>
    </location>
</feature>
<feature type="sequence conflict" description="In Ref. 1; ABD75710." evidence="6" ref="1">
    <original>K</original>
    <variation>I</variation>
    <location>
        <position position="341"/>
    </location>
</feature>